<feature type="transit peptide" description="Mitochondrion" evidence="1">
    <location>
        <begin position="1"/>
        <end position="76"/>
    </location>
</feature>
<feature type="chain" id="PRO_0000402838" description="Translation factor waclaw, mitochondrial">
    <location>
        <begin position="77"/>
        <end position="696"/>
    </location>
</feature>
<feature type="domain" description="tr-type G">
    <location>
        <begin position="97"/>
        <end position="278"/>
    </location>
</feature>
<feature type="binding site" evidence="1">
    <location>
        <begin position="106"/>
        <end position="113"/>
    </location>
    <ligand>
        <name>GTP</name>
        <dbReference type="ChEBI" id="CHEBI:37565"/>
    </ligand>
</feature>
<feature type="binding site" evidence="1">
    <location>
        <begin position="171"/>
        <end position="175"/>
    </location>
    <ligand>
        <name>GTP</name>
        <dbReference type="ChEBI" id="CHEBI:37565"/>
    </ligand>
</feature>
<feature type="binding site" evidence="1">
    <location>
        <begin position="225"/>
        <end position="228"/>
    </location>
    <ligand>
        <name>GTP</name>
        <dbReference type="ChEBI" id="CHEBI:37565"/>
    </ligand>
</feature>
<feature type="sequence conflict" description="In Ref. 1; AAC28402." evidence="2" ref="1">
    <original>K</original>
    <variation>N</variation>
    <location>
        <position position="51"/>
    </location>
</feature>
<feature type="sequence conflict" description="In Ref. 1; AAC28402." evidence="2" ref="1">
    <original>E</original>
    <variation>K</variation>
    <location>
        <position position="81"/>
    </location>
</feature>
<feature type="sequence conflict" description="In Ref. 1; AAC28402." evidence="2" ref="1">
    <original>H</original>
    <variation>N</variation>
    <location>
        <position position="93"/>
    </location>
</feature>
<feature type="sequence conflict" description="In Ref. 1; AAC28402." evidence="2" ref="1">
    <original>D</original>
    <variation>E</variation>
    <location>
        <position position="538"/>
    </location>
</feature>
<reference key="1">
    <citation type="journal article" date="1998" name="Proc. Natl. Acad. Sci. U.S.A.">
        <title>Data transferability from model organisms to human beings: insights from the functional genomics of the flightless region of Drosophila.</title>
        <authorList>
            <person name="Maleszka R."/>
            <person name="de Couet H.G."/>
            <person name="Miklos G.L.G."/>
        </authorList>
    </citation>
    <scope>NUCLEOTIDE SEQUENCE [GENOMIC DNA]</scope>
    <source>
        <strain>Canton-S</strain>
    </source>
</reference>
<reference key="2">
    <citation type="journal article" date="2000" name="Science">
        <title>The genome sequence of Drosophila melanogaster.</title>
        <authorList>
            <person name="Adams M.D."/>
            <person name="Celniker S.E."/>
            <person name="Holt R.A."/>
            <person name="Evans C.A."/>
            <person name="Gocayne J.D."/>
            <person name="Amanatides P.G."/>
            <person name="Scherer S.E."/>
            <person name="Li P.W."/>
            <person name="Hoskins R.A."/>
            <person name="Galle R.F."/>
            <person name="George R.A."/>
            <person name="Lewis S.E."/>
            <person name="Richards S."/>
            <person name="Ashburner M."/>
            <person name="Henderson S.N."/>
            <person name="Sutton G.G."/>
            <person name="Wortman J.R."/>
            <person name="Yandell M.D."/>
            <person name="Zhang Q."/>
            <person name="Chen L.X."/>
            <person name="Brandon R.C."/>
            <person name="Rogers Y.-H.C."/>
            <person name="Blazej R.G."/>
            <person name="Champe M."/>
            <person name="Pfeiffer B.D."/>
            <person name="Wan K.H."/>
            <person name="Doyle C."/>
            <person name="Baxter E.G."/>
            <person name="Helt G."/>
            <person name="Nelson C.R."/>
            <person name="Miklos G.L.G."/>
            <person name="Abril J.F."/>
            <person name="Agbayani A."/>
            <person name="An H.-J."/>
            <person name="Andrews-Pfannkoch C."/>
            <person name="Baldwin D."/>
            <person name="Ballew R.M."/>
            <person name="Basu A."/>
            <person name="Baxendale J."/>
            <person name="Bayraktaroglu L."/>
            <person name="Beasley E.M."/>
            <person name="Beeson K.Y."/>
            <person name="Benos P.V."/>
            <person name="Berman B.P."/>
            <person name="Bhandari D."/>
            <person name="Bolshakov S."/>
            <person name="Borkova D."/>
            <person name="Botchan M.R."/>
            <person name="Bouck J."/>
            <person name="Brokstein P."/>
            <person name="Brottier P."/>
            <person name="Burtis K.C."/>
            <person name="Busam D.A."/>
            <person name="Butler H."/>
            <person name="Cadieu E."/>
            <person name="Center A."/>
            <person name="Chandra I."/>
            <person name="Cherry J.M."/>
            <person name="Cawley S."/>
            <person name="Dahlke C."/>
            <person name="Davenport L.B."/>
            <person name="Davies P."/>
            <person name="de Pablos B."/>
            <person name="Delcher A."/>
            <person name="Deng Z."/>
            <person name="Mays A.D."/>
            <person name="Dew I."/>
            <person name="Dietz S.M."/>
            <person name="Dodson K."/>
            <person name="Doup L.E."/>
            <person name="Downes M."/>
            <person name="Dugan-Rocha S."/>
            <person name="Dunkov B.C."/>
            <person name="Dunn P."/>
            <person name="Durbin K.J."/>
            <person name="Evangelista C.C."/>
            <person name="Ferraz C."/>
            <person name="Ferriera S."/>
            <person name="Fleischmann W."/>
            <person name="Fosler C."/>
            <person name="Gabrielian A.E."/>
            <person name="Garg N.S."/>
            <person name="Gelbart W.M."/>
            <person name="Glasser K."/>
            <person name="Glodek A."/>
            <person name="Gong F."/>
            <person name="Gorrell J.H."/>
            <person name="Gu Z."/>
            <person name="Guan P."/>
            <person name="Harris M."/>
            <person name="Harris N.L."/>
            <person name="Harvey D.A."/>
            <person name="Heiman T.J."/>
            <person name="Hernandez J.R."/>
            <person name="Houck J."/>
            <person name="Hostin D."/>
            <person name="Houston K.A."/>
            <person name="Howland T.J."/>
            <person name="Wei M.-H."/>
            <person name="Ibegwam C."/>
            <person name="Jalali M."/>
            <person name="Kalush F."/>
            <person name="Karpen G.H."/>
            <person name="Ke Z."/>
            <person name="Kennison J.A."/>
            <person name="Ketchum K.A."/>
            <person name="Kimmel B.E."/>
            <person name="Kodira C.D."/>
            <person name="Kraft C.L."/>
            <person name="Kravitz S."/>
            <person name="Kulp D."/>
            <person name="Lai Z."/>
            <person name="Lasko P."/>
            <person name="Lei Y."/>
            <person name="Levitsky A.A."/>
            <person name="Li J.H."/>
            <person name="Li Z."/>
            <person name="Liang Y."/>
            <person name="Lin X."/>
            <person name="Liu X."/>
            <person name="Mattei B."/>
            <person name="McIntosh T.C."/>
            <person name="McLeod M.P."/>
            <person name="McPherson D."/>
            <person name="Merkulov G."/>
            <person name="Milshina N.V."/>
            <person name="Mobarry C."/>
            <person name="Morris J."/>
            <person name="Moshrefi A."/>
            <person name="Mount S.M."/>
            <person name="Moy M."/>
            <person name="Murphy B."/>
            <person name="Murphy L."/>
            <person name="Muzny D.M."/>
            <person name="Nelson D.L."/>
            <person name="Nelson D.R."/>
            <person name="Nelson K.A."/>
            <person name="Nixon K."/>
            <person name="Nusskern D.R."/>
            <person name="Pacleb J.M."/>
            <person name="Palazzolo M."/>
            <person name="Pittman G.S."/>
            <person name="Pan S."/>
            <person name="Pollard J."/>
            <person name="Puri V."/>
            <person name="Reese M.G."/>
            <person name="Reinert K."/>
            <person name="Remington K."/>
            <person name="Saunders R.D.C."/>
            <person name="Scheeler F."/>
            <person name="Shen H."/>
            <person name="Shue B.C."/>
            <person name="Siden-Kiamos I."/>
            <person name="Simpson M."/>
            <person name="Skupski M.P."/>
            <person name="Smith T.J."/>
            <person name="Spier E."/>
            <person name="Spradling A.C."/>
            <person name="Stapleton M."/>
            <person name="Strong R."/>
            <person name="Sun E."/>
            <person name="Svirskas R."/>
            <person name="Tector C."/>
            <person name="Turner R."/>
            <person name="Venter E."/>
            <person name="Wang A.H."/>
            <person name="Wang X."/>
            <person name="Wang Z.-Y."/>
            <person name="Wassarman D.A."/>
            <person name="Weinstock G.M."/>
            <person name="Weissenbach J."/>
            <person name="Williams S.M."/>
            <person name="Woodage T."/>
            <person name="Worley K.C."/>
            <person name="Wu D."/>
            <person name="Yang S."/>
            <person name="Yao Q.A."/>
            <person name="Ye J."/>
            <person name="Yeh R.-F."/>
            <person name="Zaveri J.S."/>
            <person name="Zhan M."/>
            <person name="Zhang G."/>
            <person name="Zhao Q."/>
            <person name="Zheng L."/>
            <person name="Zheng X.H."/>
            <person name="Zhong F.N."/>
            <person name="Zhong W."/>
            <person name="Zhou X."/>
            <person name="Zhu S.C."/>
            <person name="Zhu X."/>
            <person name="Smith H.O."/>
            <person name="Gibbs R.A."/>
            <person name="Myers E.W."/>
            <person name="Rubin G.M."/>
            <person name="Venter J.C."/>
        </authorList>
    </citation>
    <scope>NUCLEOTIDE SEQUENCE [LARGE SCALE GENOMIC DNA]</scope>
    <source>
        <strain>Berkeley</strain>
    </source>
</reference>
<reference key="3">
    <citation type="journal article" date="2002" name="Genome Biol.">
        <title>Annotation of the Drosophila melanogaster euchromatic genome: a systematic review.</title>
        <authorList>
            <person name="Misra S."/>
            <person name="Crosby M.A."/>
            <person name="Mungall C.J."/>
            <person name="Matthews B.B."/>
            <person name="Campbell K.S."/>
            <person name="Hradecky P."/>
            <person name="Huang Y."/>
            <person name="Kaminker J.S."/>
            <person name="Millburn G.H."/>
            <person name="Prochnik S.E."/>
            <person name="Smith C.D."/>
            <person name="Tupy J.L."/>
            <person name="Whitfield E.J."/>
            <person name="Bayraktaroglu L."/>
            <person name="Berman B.P."/>
            <person name="Bettencourt B.R."/>
            <person name="Celniker S.E."/>
            <person name="de Grey A.D.N.J."/>
            <person name="Drysdale R.A."/>
            <person name="Harris N.L."/>
            <person name="Richter J."/>
            <person name="Russo S."/>
            <person name="Schroeder A.J."/>
            <person name="Shu S.Q."/>
            <person name="Stapleton M."/>
            <person name="Yamada C."/>
            <person name="Ashburner M."/>
            <person name="Gelbart W.M."/>
            <person name="Rubin G.M."/>
            <person name="Lewis S.E."/>
        </authorList>
    </citation>
    <scope>GENOME REANNOTATION</scope>
    <source>
        <strain>Berkeley</strain>
    </source>
</reference>
<gene>
    <name evidence="1" type="primary">waw</name>
    <name type="ORF">CG1410</name>
</gene>
<sequence>MIVGYSVFFHHTVTRRTWCAVTIFFCRQRNVNSAMIRAISIRWLLQRPGDKRHSAWLVARSKSLLVRNLSTTNQVKGETEEPSQADLLREFAHMPVERIRNFSIIAHVDHGKSTLADRLLELTGAIARNGGQHQVLDNLQVERERGITVKAQTASIFHRHKGQLYLLNLIDTPGHVDFSNEVSRSLAACDGVVLLVDACHGVQAQTVANYHLAKQRQLAVVPVLNKIDIKHANPDQVCQDLKLLFGIDPDEVLRVSAKLGTGVSEVLERVIETVPPPQVQRDSDFRALIFDSWFDKYRGALNLIYVLNGKLEQNQDIQSLATKKVYSVKSISVLRPAECPVPDVSAGQVGLIACNMRNSKESIVGDTIHLKNQAVAAAGSYRPQQPLVFAGVFPADQSKHVALRSAIDKMVLNDSAVTVKIDSSPALGQGWRLGFLGLLHMEVFCQRLEQEHGAEPIITAPSVTYRLVLSNPKMIKQQGRDTMDISNAALFPEPHSIKEYYEPLVLGTIITPTEYVGQVISLCVERRGLQQSSVNIDDTRVLMKYVLPLSEIILDFHDRLKSLSSGYASFSYEDHGYHPSHLVRLDIHLNGKPVEELCRIVHVSKATGVARQMVLKLRELIPKQMVQIAIQACVGSKVLARETIKAYRKDVTAKLYGGDVTRRMKLLKQQAEGKKKMRMFANIRVPHETFINVLKR</sequence>
<comment type="function">
    <text evidence="1">Promotes mitochondrial protein synthesis. May act as a fidelity factor of the translation reaction, by catalyzing a one-codon backward translocation of tRNAs on improperly translocated ribosomes. Binds to mitochondrial ribosomes in a GTP-dependent manner.</text>
</comment>
<comment type="catalytic activity">
    <reaction evidence="1">
        <text>GTP + H2O = GDP + phosphate + H(+)</text>
        <dbReference type="Rhea" id="RHEA:19669"/>
        <dbReference type="ChEBI" id="CHEBI:15377"/>
        <dbReference type="ChEBI" id="CHEBI:15378"/>
        <dbReference type="ChEBI" id="CHEBI:37565"/>
        <dbReference type="ChEBI" id="CHEBI:43474"/>
        <dbReference type="ChEBI" id="CHEBI:58189"/>
    </reaction>
</comment>
<comment type="subcellular location">
    <subcellularLocation>
        <location evidence="1">Mitochondrion inner membrane</location>
        <topology evidence="1">Peripheral membrane protein</topology>
        <orientation evidence="1">Matrix side</orientation>
    </subcellularLocation>
</comment>
<comment type="similarity">
    <text evidence="2">Belongs to the TRAFAC class translation factor GTPase superfamily. Classic translation factor GTPase family. LepA subfamily.</text>
</comment>
<comment type="sequence caution" evidence="2">
    <conflict type="erroneous gene model prediction">
        <sequence resource="EMBL-CDS" id="AAC28402"/>
    </conflict>
</comment>
<comment type="sequence caution" evidence="2">
    <conflict type="frameshift">
        <sequence resource="EMBL-CDS" id="AAC28402"/>
    </conflict>
</comment>
<dbReference type="EC" id="3.6.5.-"/>
<dbReference type="EMBL" id="AF017777">
    <property type="protein sequence ID" value="AAC28402.1"/>
    <property type="status" value="ALT_SEQ"/>
    <property type="molecule type" value="Genomic_DNA"/>
</dbReference>
<dbReference type="EMBL" id="AE014298">
    <property type="protein sequence ID" value="AAF50824.2"/>
    <property type="molecule type" value="Genomic_DNA"/>
</dbReference>
<dbReference type="PIR" id="T08430">
    <property type="entry name" value="T08430"/>
</dbReference>
<dbReference type="RefSeq" id="NP_001027089.1">
    <property type="nucleotide sequence ID" value="NM_001031918.2"/>
</dbReference>
<dbReference type="SMR" id="Q9VRH6"/>
<dbReference type="FunCoup" id="Q9VRH6">
    <property type="interactions" value="1885"/>
</dbReference>
<dbReference type="IntAct" id="Q9VRH6">
    <property type="interactions" value="1"/>
</dbReference>
<dbReference type="STRING" id="7227.FBpp0099977"/>
<dbReference type="PaxDb" id="7227-FBpp0099977"/>
<dbReference type="EnsemblMetazoa" id="FBtr0100536">
    <property type="protein sequence ID" value="FBpp0099977"/>
    <property type="gene ID" value="FBgn0024182"/>
</dbReference>
<dbReference type="GeneID" id="3771960"/>
<dbReference type="KEGG" id="dme:Dmel_CG1410"/>
<dbReference type="UCSC" id="CG1410-RA">
    <property type="organism name" value="d. melanogaster"/>
</dbReference>
<dbReference type="AGR" id="FB:FBgn0024182"/>
<dbReference type="CTD" id="3771960"/>
<dbReference type="FlyBase" id="FBgn0024182">
    <property type="gene designation" value="waw"/>
</dbReference>
<dbReference type="VEuPathDB" id="VectorBase:FBgn0024182"/>
<dbReference type="eggNOG" id="KOG0462">
    <property type="taxonomic scope" value="Eukaryota"/>
</dbReference>
<dbReference type="HOGENOM" id="CLU_009995_3_3_1"/>
<dbReference type="InParanoid" id="Q9VRH6"/>
<dbReference type="OMA" id="QVKCDEN"/>
<dbReference type="OrthoDB" id="1074at2759"/>
<dbReference type="PhylomeDB" id="Q9VRH6"/>
<dbReference type="BioGRID-ORCS" id="3771960">
    <property type="hits" value="0 hits in 1 CRISPR screen"/>
</dbReference>
<dbReference type="GenomeRNAi" id="3771960"/>
<dbReference type="PRO" id="PR:Q9VRH6"/>
<dbReference type="Proteomes" id="UP000000803">
    <property type="component" value="Chromosome X"/>
</dbReference>
<dbReference type="Bgee" id="FBgn0024182">
    <property type="expression patterns" value="Expressed in ovary and 5 other cell types or tissues"/>
</dbReference>
<dbReference type="GO" id="GO:0005743">
    <property type="term" value="C:mitochondrial inner membrane"/>
    <property type="evidence" value="ECO:0007669"/>
    <property type="project" value="UniProtKB-SubCell"/>
</dbReference>
<dbReference type="GO" id="GO:0005759">
    <property type="term" value="C:mitochondrial matrix"/>
    <property type="evidence" value="ECO:0000250"/>
    <property type="project" value="FlyBase"/>
</dbReference>
<dbReference type="GO" id="GO:0005739">
    <property type="term" value="C:mitochondrion"/>
    <property type="evidence" value="ECO:0000318"/>
    <property type="project" value="GO_Central"/>
</dbReference>
<dbReference type="GO" id="GO:0005525">
    <property type="term" value="F:GTP binding"/>
    <property type="evidence" value="ECO:0007669"/>
    <property type="project" value="UniProtKB-UniRule"/>
</dbReference>
<dbReference type="GO" id="GO:0003924">
    <property type="term" value="F:GTPase activity"/>
    <property type="evidence" value="ECO:0000250"/>
    <property type="project" value="FlyBase"/>
</dbReference>
<dbReference type="GO" id="GO:0097177">
    <property type="term" value="F:mitochondrial ribosome binding"/>
    <property type="evidence" value="ECO:0000250"/>
    <property type="project" value="FlyBase"/>
</dbReference>
<dbReference type="GO" id="GO:0045727">
    <property type="term" value="P:positive regulation of translation"/>
    <property type="evidence" value="ECO:0000318"/>
    <property type="project" value="GO_Central"/>
</dbReference>
<dbReference type="GO" id="GO:0006412">
    <property type="term" value="P:translation"/>
    <property type="evidence" value="ECO:0007669"/>
    <property type="project" value="UniProtKB-KW"/>
</dbReference>
<dbReference type="CDD" id="cd03699">
    <property type="entry name" value="EF4_II"/>
    <property type="match status" value="1"/>
</dbReference>
<dbReference type="CDD" id="cd16260">
    <property type="entry name" value="EF4_III"/>
    <property type="match status" value="1"/>
</dbReference>
<dbReference type="CDD" id="cd01890">
    <property type="entry name" value="LepA"/>
    <property type="match status" value="1"/>
</dbReference>
<dbReference type="CDD" id="cd03709">
    <property type="entry name" value="lepA_C"/>
    <property type="match status" value="1"/>
</dbReference>
<dbReference type="FunFam" id="3.40.50.300:FF:000078">
    <property type="entry name" value="Elongation factor 4"/>
    <property type="match status" value="1"/>
</dbReference>
<dbReference type="FunFam" id="2.40.30.10:FF:000015">
    <property type="entry name" value="Translation factor GUF1, mitochondrial"/>
    <property type="match status" value="1"/>
</dbReference>
<dbReference type="FunFam" id="3.30.70.240:FF:000007">
    <property type="entry name" value="Translation factor GUF1, mitochondrial"/>
    <property type="match status" value="1"/>
</dbReference>
<dbReference type="FunFam" id="3.30.70.2570:FF:000001">
    <property type="entry name" value="Translation factor GUF1, mitochondrial"/>
    <property type="match status" value="1"/>
</dbReference>
<dbReference type="FunFam" id="3.30.70.870:FF:000004">
    <property type="entry name" value="Translation factor GUF1, mitochondrial"/>
    <property type="match status" value="1"/>
</dbReference>
<dbReference type="Gene3D" id="3.30.70.240">
    <property type="match status" value="1"/>
</dbReference>
<dbReference type="Gene3D" id="3.30.70.2570">
    <property type="entry name" value="Elongation factor 4, C-terminal domain"/>
    <property type="match status" value="1"/>
</dbReference>
<dbReference type="Gene3D" id="3.30.70.870">
    <property type="entry name" value="Elongation Factor G (Translational Gtpase), domain 3"/>
    <property type="match status" value="1"/>
</dbReference>
<dbReference type="Gene3D" id="3.40.50.300">
    <property type="entry name" value="P-loop containing nucleotide triphosphate hydrolases"/>
    <property type="match status" value="1"/>
</dbReference>
<dbReference type="Gene3D" id="2.40.30.10">
    <property type="entry name" value="Translation factors"/>
    <property type="match status" value="1"/>
</dbReference>
<dbReference type="HAMAP" id="MF_00071">
    <property type="entry name" value="LepA"/>
    <property type="match status" value="1"/>
</dbReference>
<dbReference type="InterPro" id="IPR006297">
    <property type="entry name" value="EF-4"/>
</dbReference>
<dbReference type="InterPro" id="IPR035647">
    <property type="entry name" value="EFG_III/V"/>
</dbReference>
<dbReference type="InterPro" id="IPR000640">
    <property type="entry name" value="EFG_V-like"/>
</dbReference>
<dbReference type="InterPro" id="IPR031157">
    <property type="entry name" value="G_TR_CS"/>
</dbReference>
<dbReference type="InterPro" id="IPR038363">
    <property type="entry name" value="LepA_C_sf"/>
</dbReference>
<dbReference type="InterPro" id="IPR013842">
    <property type="entry name" value="LepA_CTD"/>
</dbReference>
<dbReference type="InterPro" id="IPR035654">
    <property type="entry name" value="LepA_IV"/>
</dbReference>
<dbReference type="InterPro" id="IPR027417">
    <property type="entry name" value="P-loop_NTPase"/>
</dbReference>
<dbReference type="InterPro" id="IPR005225">
    <property type="entry name" value="Small_GTP-bd"/>
</dbReference>
<dbReference type="InterPro" id="IPR000795">
    <property type="entry name" value="T_Tr_GTP-bd_dom"/>
</dbReference>
<dbReference type="NCBIfam" id="TIGR01393">
    <property type="entry name" value="lepA"/>
    <property type="match status" value="1"/>
</dbReference>
<dbReference type="NCBIfam" id="TIGR00231">
    <property type="entry name" value="small_GTP"/>
    <property type="match status" value="1"/>
</dbReference>
<dbReference type="PANTHER" id="PTHR43512:SF7">
    <property type="entry name" value="TRANSLATION FACTOR GUF1, MITOCHONDRIAL"/>
    <property type="match status" value="1"/>
</dbReference>
<dbReference type="PANTHER" id="PTHR43512">
    <property type="entry name" value="TRANSLATION FACTOR GUF1-RELATED"/>
    <property type="match status" value="1"/>
</dbReference>
<dbReference type="Pfam" id="PF00679">
    <property type="entry name" value="EFG_C"/>
    <property type="match status" value="1"/>
</dbReference>
<dbReference type="Pfam" id="PF00009">
    <property type="entry name" value="GTP_EFTU"/>
    <property type="match status" value="1"/>
</dbReference>
<dbReference type="Pfam" id="PF06421">
    <property type="entry name" value="LepA_C"/>
    <property type="match status" value="1"/>
</dbReference>
<dbReference type="PRINTS" id="PR00315">
    <property type="entry name" value="ELONGATNFCT"/>
</dbReference>
<dbReference type="SUPFAM" id="SSF54980">
    <property type="entry name" value="EF-G C-terminal domain-like"/>
    <property type="match status" value="2"/>
</dbReference>
<dbReference type="SUPFAM" id="SSF52540">
    <property type="entry name" value="P-loop containing nucleoside triphosphate hydrolases"/>
    <property type="match status" value="1"/>
</dbReference>
<dbReference type="PROSITE" id="PS00301">
    <property type="entry name" value="G_TR_1"/>
    <property type="match status" value="1"/>
</dbReference>
<dbReference type="PROSITE" id="PS51722">
    <property type="entry name" value="G_TR_2"/>
    <property type="match status" value="1"/>
</dbReference>
<protein>
    <recommendedName>
        <fullName evidence="1">Translation factor waclaw, mitochondrial</fullName>
        <ecNumber>3.6.5.-</ecNumber>
    </recommendedName>
    <alternativeName>
        <fullName evidence="1">Elongation factor 4 homolog</fullName>
        <shortName evidence="1">EF-4</shortName>
    </alternativeName>
    <alternativeName>
        <fullName evidence="1">GTPase GUF1 homolog</fullName>
    </alternativeName>
    <alternativeName>
        <fullName evidence="1">Ribosomal back-translocase</fullName>
    </alternativeName>
</protein>
<keyword id="KW-0342">GTP-binding</keyword>
<keyword id="KW-0378">Hydrolase</keyword>
<keyword id="KW-0472">Membrane</keyword>
<keyword id="KW-0496">Mitochondrion</keyword>
<keyword id="KW-0999">Mitochondrion inner membrane</keyword>
<keyword id="KW-0547">Nucleotide-binding</keyword>
<keyword id="KW-0648">Protein biosynthesis</keyword>
<keyword id="KW-1185">Reference proteome</keyword>
<keyword id="KW-0809">Transit peptide</keyword>
<organism>
    <name type="scientific">Drosophila melanogaster</name>
    <name type="common">Fruit fly</name>
    <dbReference type="NCBI Taxonomy" id="7227"/>
    <lineage>
        <taxon>Eukaryota</taxon>
        <taxon>Metazoa</taxon>
        <taxon>Ecdysozoa</taxon>
        <taxon>Arthropoda</taxon>
        <taxon>Hexapoda</taxon>
        <taxon>Insecta</taxon>
        <taxon>Pterygota</taxon>
        <taxon>Neoptera</taxon>
        <taxon>Endopterygota</taxon>
        <taxon>Diptera</taxon>
        <taxon>Brachycera</taxon>
        <taxon>Muscomorpha</taxon>
        <taxon>Ephydroidea</taxon>
        <taxon>Drosophilidae</taxon>
        <taxon>Drosophila</taxon>
        <taxon>Sophophora</taxon>
    </lineage>
</organism>
<proteinExistence type="inferred from homology"/>
<name>GUF1_DROME</name>
<accession>Q9VRH6</accession>
<accession>O61347</accession>
<evidence type="ECO:0000255" key="1">
    <source>
        <dbReference type="HAMAP-Rule" id="MF_03137"/>
    </source>
</evidence>
<evidence type="ECO:0000305" key="2"/>